<accession>A0A286LEZ6</accession>
<dbReference type="EC" id="2.7.1.-" evidence="6"/>
<dbReference type="EC" id="2.7.1.222" evidence="6"/>
<dbReference type="EMBL" id="KY984102">
    <property type="protein sequence ID" value="ASU62240.1"/>
    <property type="molecule type" value="mRNA"/>
</dbReference>
<dbReference type="SMR" id="A0A286LEZ6"/>
<dbReference type="GO" id="GO:0140383">
    <property type="term" value="F:4-hydroxytryptamine kinase activity"/>
    <property type="evidence" value="ECO:0007669"/>
    <property type="project" value="UniProtKB-EC"/>
</dbReference>
<dbReference type="GO" id="GO:0005524">
    <property type="term" value="F:ATP binding"/>
    <property type="evidence" value="ECO:0007669"/>
    <property type="project" value="UniProtKB-KW"/>
</dbReference>
<dbReference type="GO" id="GO:0140380">
    <property type="term" value="P:psilocybin biosynthetic process"/>
    <property type="evidence" value="ECO:0000250"/>
    <property type="project" value="GO_Central"/>
</dbReference>
<dbReference type="Gene3D" id="3.90.1200.10">
    <property type="match status" value="1"/>
</dbReference>
<dbReference type="Gene3D" id="3.30.200.20">
    <property type="entry name" value="Phosphorylase Kinase, domain 1"/>
    <property type="match status" value="1"/>
</dbReference>
<dbReference type="InterPro" id="IPR004119">
    <property type="entry name" value="EcKL"/>
</dbReference>
<dbReference type="InterPro" id="IPR011009">
    <property type="entry name" value="Kinase-like_dom_sf"/>
</dbReference>
<dbReference type="PANTHER" id="PTHR34273">
    <property type="entry name" value="METHYLTHIORIBOSE KINASE"/>
    <property type="match status" value="1"/>
</dbReference>
<dbReference type="PANTHER" id="PTHR34273:SF2">
    <property type="entry name" value="METHYLTHIORIBOSE KINASE"/>
    <property type="match status" value="1"/>
</dbReference>
<dbReference type="Pfam" id="PF02958">
    <property type="entry name" value="EcKL"/>
    <property type="match status" value="1"/>
</dbReference>
<dbReference type="SUPFAM" id="SSF56112">
    <property type="entry name" value="Protein kinase-like (PK-like)"/>
    <property type="match status" value="1"/>
</dbReference>
<feature type="chain" id="PRO_0000445828" description="4-hydroxytryptamine kinase">
    <location>
        <begin position="1"/>
        <end position="361"/>
    </location>
</feature>
<feature type="active site" evidence="2">
    <location>
        <position position="224"/>
    </location>
</feature>
<feature type="binding site" evidence="1">
    <location>
        <position position="37"/>
    </location>
    <ligand>
        <name>ATP</name>
        <dbReference type="ChEBI" id="CHEBI:30616"/>
    </ligand>
</feature>
<feature type="binding site" evidence="1">
    <location>
        <position position="57"/>
    </location>
    <ligand>
        <name>ATP</name>
        <dbReference type="ChEBI" id="CHEBI:30616"/>
    </ligand>
</feature>
<feature type="binding site" evidence="1">
    <location>
        <begin position="118"/>
        <end position="120"/>
    </location>
    <ligand>
        <name>ATP</name>
        <dbReference type="ChEBI" id="CHEBI:30616"/>
    </ligand>
</feature>
<feature type="binding site" evidence="1">
    <location>
        <begin position="248"/>
        <end position="250"/>
    </location>
    <ligand>
        <name>ATP</name>
        <dbReference type="ChEBI" id="CHEBI:30616"/>
    </ligand>
</feature>
<proteinExistence type="evidence at protein level"/>
<organism>
    <name type="scientific">Psilocybe cyanescens</name>
    <dbReference type="NCBI Taxonomy" id="93625"/>
    <lineage>
        <taxon>Eukaryota</taxon>
        <taxon>Fungi</taxon>
        <taxon>Dikarya</taxon>
        <taxon>Basidiomycota</taxon>
        <taxon>Agaricomycotina</taxon>
        <taxon>Agaricomycetes</taxon>
        <taxon>Agaricomycetidae</taxon>
        <taxon>Agaricales</taxon>
        <taxon>Agaricineae</taxon>
        <taxon>Strophariaceae</taxon>
        <taxon>Psilocybe</taxon>
    </lineage>
</organism>
<gene>
    <name evidence="7" type="primary">psiK</name>
</gene>
<protein>
    <recommendedName>
        <fullName evidence="7">4-hydroxytryptamine kinase</fullName>
        <ecNumber evidence="6">2.7.1.-</ecNumber>
        <ecNumber evidence="6">2.7.1.222</ecNumber>
    </recommendedName>
    <alternativeName>
        <fullName evidence="7">Psilocybin biosynthesis kinase</fullName>
    </alternativeName>
</protein>
<evidence type="ECO:0000250" key="1">
    <source>
        <dbReference type="UniProtKB" id="O31663"/>
    </source>
</evidence>
<evidence type="ECO:0000250" key="2">
    <source>
        <dbReference type="UniProtKB" id="P0DPA8"/>
    </source>
</evidence>
<evidence type="ECO:0000269" key="3">
    <source>
    </source>
</evidence>
<evidence type="ECO:0000269" key="4">
    <source>
    </source>
</evidence>
<evidence type="ECO:0000269" key="5">
    <source>
    </source>
</evidence>
<evidence type="ECO:0000269" key="6">
    <source>
    </source>
</evidence>
<evidence type="ECO:0000303" key="7">
    <source>
    </source>
</evidence>
<evidence type="ECO:0000305" key="8"/>
<evidence type="ECO:0000305" key="9">
    <source>
    </source>
</evidence>
<reference key="1">
    <citation type="journal article" date="2017" name="Angew. Chem. Int. Ed.">
        <title>Enzymatic synthesis of psilocybin.</title>
        <authorList>
            <person name="Fricke J."/>
            <person name="Blei F."/>
            <person name="Hoffmeister D."/>
        </authorList>
    </citation>
    <scope>NUCLEOTIDE SEQUENCE [MRNA]</scope>
    <scope>IDENTIFICATION</scope>
    <scope>FUNCTION</scope>
    <scope>PATHWAY</scope>
    <source>
        <strain>FSU 12416</strain>
    </source>
</reference>
<reference key="2">
    <citation type="journal article" date="2016" name="J. Psychopharmacol.">
        <title>Rapid and sustained symptom reduction following psilocybin treatment for anxiety and depression in patients with life-threatening cancer: a randomized controlled trial.</title>
        <authorList>
            <person name="Ross S."/>
            <person name="Bossis A."/>
            <person name="Guss J."/>
            <person name="Agin-Liebes G."/>
            <person name="Malone T."/>
            <person name="Cohen B."/>
            <person name="Mennenga S.E."/>
            <person name="Belser A."/>
            <person name="Kalliontzi K."/>
            <person name="Babb J."/>
            <person name="Su Z."/>
            <person name="Corby P."/>
            <person name="Schmidt B.L."/>
        </authorList>
    </citation>
    <scope>BIOTECHNOLOGY</scope>
</reference>
<reference key="3">
    <citation type="journal article" date="2018" name="Evol. Lett.">
        <title>Horizontal gene cluster transfer increased hallucinogenic mushroom diversity.</title>
        <authorList>
            <person name="Reynolds H.T."/>
            <person name="Vijayakumar V."/>
            <person name="Gluck-Thaler E."/>
            <person name="Korotkin H.B."/>
            <person name="Matheny P.B."/>
            <person name="Slot J.C."/>
        </authorList>
    </citation>
    <scope>FUNCTION</scope>
</reference>
<reference key="4">
    <citation type="journal article" date="2022" name="ChemBioChem">
        <title>Genetic survey of Psilocybe natural products.</title>
        <authorList>
            <person name="Doerner S."/>
            <person name="Rogge K."/>
            <person name="Fricke J."/>
            <person name="Schaefer T."/>
            <person name="Wurlitzer J.M."/>
            <person name="Gressler M."/>
            <person name="Pham D.N.K."/>
            <person name="Manke D.R."/>
            <person name="Chadeayne A.R."/>
            <person name="Hoffmeister D."/>
        </authorList>
    </citation>
    <scope>FUNCTION</scope>
    <scope>CATALYTIC ACTIVITY</scope>
</reference>
<name>PSIK_PSICY</name>
<sequence length="361" mass="40315">MTFDLKTEEGLLSYLTKHLSLDVAPNGVKRLSGGFVNVTWRVGLNAPYHGHTSIILKHAQPHLSSDIDFKIGVERSAYEYQALKIVSANSSLLGSSDIRVSVPEGLHYDVVNNALIMQDVGTMKTLLDYVTAKPPISAEIASLVGSQIGAFIARLHNLGRENKDKDDFKFFSGNIVGRTTADQLYQTIIPNAAKYGIDDPILPIVVKELVEEVMNSEETLIMADLWSGNILLQFDENSTELTRIWLVDWELCKYGPPSLDMGYFLGDCFLVARFQDQLVGTSMRQAYLKSYARNVKEPINYAKATAGIGAHLVMWTDFMKWGNDEEREEFVKKGVEAFHEANEDNRNGEITSILVKEASRT</sequence>
<keyword id="KW-0067">ATP-binding</keyword>
<keyword id="KW-0418">Kinase</keyword>
<keyword id="KW-0460">Magnesium</keyword>
<keyword id="KW-0547">Nucleotide-binding</keyword>
<keyword id="KW-0808">Transferase</keyword>
<comment type="function">
    <text evidence="2 4 5 6">4-hydroxytryptamine kinase; part of the gene cluster that mediates the biosynthesis of psilocybin, a psychotropic tryptamine-derived natural product (PubMed:28763571, PubMed:30283667). The first step in the pathway is the decarboxylation of L-tryptophan to tryptamine by the decarboxylase psiD. PsiD does not decarboxylate phenylalanine, tyrosine, or 5-hydroxy- L -tryptophan (5-HTP) (PubMed:30283667). 4-hydroxy-L-tryptophan is accepted as substrate by psiD as well. The cytochrome P450 monooxygenase psiH then converts tryptamine to 4-hydroxytryptamine. The kinase psiK catalyzes the 4-O-phosphorylation step by converting 4-hydroxytryptamine into norbaeocystin. The methyltransferase psiM then catalyzes iterative methyl transfer to the amino group of norbaeocystin to yield psilocybin via a monomethylated intermediate, baeocystin. 4-hydroxy-6-methyl-l-tryptophancan also be converted the decarboxylase PsiD, kinase PsiK, and methyltransferase PsiM into respectively 6-methyl-norbaeocystin, 6-methylbaeocystin, and 6-methylpsilocybin (By similarity). PsiK kinase can also turn psilocin into psilocybin (PubMed:35583969). This activity may represent a protective mechanism to rephosphorylate the unstable psilocin to the stable psilocybin in case of intracellular ester cleavage (PubMed:35583969). Moreover, psiK is able to O-phosphorylate the quaternary amine 4-hydroxy-N,N,N-trimethyltryptamine (4-OH-TMT) to yield aeruginascin, another bioactive compound found in Psilocybe species (PubMed:35583969).</text>
</comment>
<comment type="catalytic activity">
    <reaction evidence="2">
        <text>4-hydroxytryptamine + ATP = norbaeocystin + ADP + H(+)</text>
        <dbReference type="Rhea" id="RHEA:55564"/>
        <dbReference type="ChEBI" id="CHEBI:15378"/>
        <dbReference type="ChEBI" id="CHEBI:30616"/>
        <dbReference type="ChEBI" id="CHEBI:139069"/>
        <dbReference type="ChEBI" id="CHEBI:139070"/>
        <dbReference type="ChEBI" id="CHEBI:456216"/>
        <dbReference type="EC" id="2.7.1.222"/>
    </reaction>
    <physiologicalReaction direction="left-to-right" evidence="2">
        <dbReference type="Rhea" id="RHEA:55565"/>
    </physiologicalReaction>
</comment>
<comment type="catalytic activity">
    <reaction evidence="6">
        <text>psilocin + ATP = psilocybin + ADP + H(+)</text>
        <dbReference type="Rhea" id="RHEA:73911"/>
        <dbReference type="ChEBI" id="CHEBI:15378"/>
        <dbReference type="ChEBI" id="CHEBI:30616"/>
        <dbReference type="ChEBI" id="CHEBI:139072"/>
        <dbReference type="ChEBI" id="CHEBI:193059"/>
        <dbReference type="ChEBI" id="CHEBI:456216"/>
        <dbReference type="EC" id="2.7.1.222"/>
    </reaction>
    <physiologicalReaction direction="left-to-right" evidence="6">
        <dbReference type="Rhea" id="RHEA:73912"/>
    </physiologicalReaction>
</comment>
<comment type="catalytic activity">
    <reaction evidence="6">
        <text>4-hydroxy-N,N,N-trimethyltryptamine + ATP = aeruginascin + ADP + H(+)</text>
        <dbReference type="Rhea" id="RHEA:73907"/>
        <dbReference type="ChEBI" id="CHEBI:15378"/>
        <dbReference type="ChEBI" id="CHEBI:30616"/>
        <dbReference type="ChEBI" id="CHEBI:193060"/>
        <dbReference type="ChEBI" id="CHEBI:193061"/>
        <dbReference type="ChEBI" id="CHEBI:456216"/>
    </reaction>
    <physiologicalReaction direction="left-to-right" evidence="6">
        <dbReference type="Rhea" id="RHEA:73908"/>
    </physiologicalReaction>
</comment>
<comment type="cofactor">
    <cofactor evidence="2">
        <name>Mg(2+)</name>
        <dbReference type="ChEBI" id="CHEBI:18420"/>
    </cofactor>
</comment>
<comment type="pathway">
    <text evidence="9">Secondary metabolite biosynthesis.</text>
</comment>
<comment type="subunit">
    <text evidence="2">Monomer.</text>
</comment>
<comment type="biotechnology">
    <text evidence="3">The pharmaceutical interesting psilocybin as a treatment option against depression and anxiety is being investigated in advanced clinical trials.</text>
</comment>
<comment type="similarity">
    <text evidence="8">Belongs to the methylthioribose kinase family.</text>
</comment>